<accession>O32175</accession>
<reference key="1">
    <citation type="journal article" date="1997" name="Nature">
        <title>The complete genome sequence of the Gram-positive bacterium Bacillus subtilis.</title>
        <authorList>
            <person name="Kunst F."/>
            <person name="Ogasawara N."/>
            <person name="Moszer I."/>
            <person name="Albertini A.M."/>
            <person name="Alloni G."/>
            <person name="Azevedo V."/>
            <person name="Bertero M.G."/>
            <person name="Bessieres P."/>
            <person name="Bolotin A."/>
            <person name="Borchert S."/>
            <person name="Borriss R."/>
            <person name="Boursier L."/>
            <person name="Brans A."/>
            <person name="Braun M."/>
            <person name="Brignell S.C."/>
            <person name="Bron S."/>
            <person name="Brouillet S."/>
            <person name="Bruschi C.V."/>
            <person name="Caldwell B."/>
            <person name="Capuano V."/>
            <person name="Carter N.M."/>
            <person name="Choi S.-K."/>
            <person name="Codani J.-J."/>
            <person name="Connerton I.F."/>
            <person name="Cummings N.J."/>
            <person name="Daniel R.A."/>
            <person name="Denizot F."/>
            <person name="Devine K.M."/>
            <person name="Duesterhoeft A."/>
            <person name="Ehrlich S.D."/>
            <person name="Emmerson P.T."/>
            <person name="Entian K.-D."/>
            <person name="Errington J."/>
            <person name="Fabret C."/>
            <person name="Ferrari E."/>
            <person name="Foulger D."/>
            <person name="Fritz C."/>
            <person name="Fujita M."/>
            <person name="Fujita Y."/>
            <person name="Fuma S."/>
            <person name="Galizzi A."/>
            <person name="Galleron N."/>
            <person name="Ghim S.-Y."/>
            <person name="Glaser P."/>
            <person name="Goffeau A."/>
            <person name="Golightly E.J."/>
            <person name="Grandi G."/>
            <person name="Guiseppi G."/>
            <person name="Guy B.J."/>
            <person name="Haga K."/>
            <person name="Haiech J."/>
            <person name="Harwood C.R."/>
            <person name="Henaut A."/>
            <person name="Hilbert H."/>
            <person name="Holsappel S."/>
            <person name="Hosono S."/>
            <person name="Hullo M.-F."/>
            <person name="Itaya M."/>
            <person name="Jones L.-M."/>
            <person name="Joris B."/>
            <person name="Karamata D."/>
            <person name="Kasahara Y."/>
            <person name="Klaerr-Blanchard M."/>
            <person name="Klein C."/>
            <person name="Kobayashi Y."/>
            <person name="Koetter P."/>
            <person name="Koningstein G."/>
            <person name="Krogh S."/>
            <person name="Kumano M."/>
            <person name="Kurita K."/>
            <person name="Lapidus A."/>
            <person name="Lardinois S."/>
            <person name="Lauber J."/>
            <person name="Lazarevic V."/>
            <person name="Lee S.-M."/>
            <person name="Levine A."/>
            <person name="Liu H."/>
            <person name="Masuda S."/>
            <person name="Mauel C."/>
            <person name="Medigue C."/>
            <person name="Medina N."/>
            <person name="Mellado R.P."/>
            <person name="Mizuno M."/>
            <person name="Moestl D."/>
            <person name="Nakai S."/>
            <person name="Noback M."/>
            <person name="Noone D."/>
            <person name="O'Reilly M."/>
            <person name="Ogawa K."/>
            <person name="Ogiwara A."/>
            <person name="Oudega B."/>
            <person name="Park S.-H."/>
            <person name="Parro V."/>
            <person name="Pohl T.M."/>
            <person name="Portetelle D."/>
            <person name="Porwollik S."/>
            <person name="Prescott A.M."/>
            <person name="Presecan E."/>
            <person name="Pujic P."/>
            <person name="Purnelle B."/>
            <person name="Rapoport G."/>
            <person name="Rey M."/>
            <person name="Reynolds S."/>
            <person name="Rieger M."/>
            <person name="Rivolta C."/>
            <person name="Rocha E."/>
            <person name="Roche B."/>
            <person name="Rose M."/>
            <person name="Sadaie Y."/>
            <person name="Sato T."/>
            <person name="Scanlan E."/>
            <person name="Schleich S."/>
            <person name="Schroeter R."/>
            <person name="Scoffone F."/>
            <person name="Sekiguchi J."/>
            <person name="Sekowska A."/>
            <person name="Seror S.J."/>
            <person name="Serror P."/>
            <person name="Shin B.-S."/>
            <person name="Soldo B."/>
            <person name="Sorokin A."/>
            <person name="Tacconi E."/>
            <person name="Takagi T."/>
            <person name="Takahashi H."/>
            <person name="Takemaru K."/>
            <person name="Takeuchi M."/>
            <person name="Tamakoshi A."/>
            <person name="Tanaka T."/>
            <person name="Terpstra P."/>
            <person name="Tognoni A."/>
            <person name="Tosato V."/>
            <person name="Uchiyama S."/>
            <person name="Vandenbol M."/>
            <person name="Vannier F."/>
            <person name="Vassarotti A."/>
            <person name="Viari A."/>
            <person name="Wambutt R."/>
            <person name="Wedler E."/>
            <person name="Wedler H."/>
            <person name="Weitzenegger T."/>
            <person name="Winters P."/>
            <person name="Wipat A."/>
            <person name="Yamamoto H."/>
            <person name="Yamane K."/>
            <person name="Yasumoto K."/>
            <person name="Yata K."/>
            <person name="Yoshida K."/>
            <person name="Yoshikawa H.-F."/>
            <person name="Zumstein E."/>
            <person name="Yoshikawa H."/>
            <person name="Danchin A."/>
        </authorList>
    </citation>
    <scope>NUCLEOTIDE SEQUENCE [LARGE SCALE GENOMIC DNA]</scope>
    <source>
        <strain>168</strain>
    </source>
</reference>
<protein>
    <recommendedName>
        <fullName>Uncharacterized protein YusI</fullName>
    </recommendedName>
</protein>
<proteinExistence type="inferred from homology"/>
<organism>
    <name type="scientific">Bacillus subtilis (strain 168)</name>
    <dbReference type="NCBI Taxonomy" id="224308"/>
    <lineage>
        <taxon>Bacteria</taxon>
        <taxon>Bacillati</taxon>
        <taxon>Bacillota</taxon>
        <taxon>Bacilli</taxon>
        <taxon>Bacillales</taxon>
        <taxon>Bacillaceae</taxon>
        <taxon>Bacillus</taxon>
    </lineage>
</organism>
<comment type="similarity">
    <text evidence="2">Belongs to the ArsC family.</text>
</comment>
<feature type="chain" id="PRO_0000162584" description="Uncharacterized protein YusI">
    <location>
        <begin position="1"/>
        <end position="118"/>
    </location>
</feature>
<feature type="disulfide bond" description="Redox-active" evidence="1">
    <location>
        <begin position="11"/>
        <end position="14"/>
    </location>
</feature>
<gene>
    <name type="primary">yusI</name>
    <name type="ordered locus">BSU32810</name>
</gene>
<evidence type="ECO:0000255" key="1">
    <source>
        <dbReference type="PROSITE-ProRule" id="PRU01282"/>
    </source>
</evidence>
<evidence type="ECO:0000305" key="2"/>
<sequence length="118" mass="13909">MSLTFYWYPKCGTCRKAKKWLEEHGKEINEIHIAEQPPSKEELKALYEKSGLDLKKFFNTSGMKYRELNLKEKLYHMSEDEQLELLASDGMLIKRPLTTDGEKVTVGFKEDQFEENWA</sequence>
<name>YUSI_BACSU</name>
<keyword id="KW-1015">Disulfide bond</keyword>
<keyword id="KW-0560">Oxidoreductase</keyword>
<keyword id="KW-0676">Redox-active center</keyword>
<keyword id="KW-1185">Reference proteome</keyword>
<dbReference type="EMBL" id="AL009126">
    <property type="protein sequence ID" value="CAB15270.1"/>
    <property type="molecule type" value="Genomic_DNA"/>
</dbReference>
<dbReference type="PIR" id="B70021">
    <property type="entry name" value="B70021"/>
</dbReference>
<dbReference type="RefSeq" id="NP_391160.1">
    <property type="nucleotide sequence ID" value="NC_000964.3"/>
</dbReference>
<dbReference type="RefSeq" id="WP_003222779.1">
    <property type="nucleotide sequence ID" value="NZ_OZ025638.1"/>
</dbReference>
<dbReference type="SMR" id="O32175"/>
<dbReference type="FunCoup" id="O32175">
    <property type="interactions" value="164"/>
</dbReference>
<dbReference type="STRING" id="224308.BSU32810"/>
<dbReference type="jPOST" id="O32175"/>
<dbReference type="PaxDb" id="224308-BSU32810"/>
<dbReference type="DNASU" id="936722"/>
<dbReference type="EnsemblBacteria" id="CAB15270">
    <property type="protein sequence ID" value="CAB15270"/>
    <property type="gene ID" value="BSU_32810"/>
</dbReference>
<dbReference type="GeneID" id="936722"/>
<dbReference type="KEGG" id="bsu:BSU32810"/>
<dbReference type="PATRIC" id="fig|224308.179.peg.3555"/>
<dbReference type="eggNOG" id="COG1393">
    <property type="taxonomic scope" value="Bacteria"/>
</dbReference>
<dbReference type="InParanoid" id="O32175"/>
<dbReference type="OrthoDB" id="9794155at2"/>
<dbReference type="PhylomeDB" id="O32175"/>
<dbReference type="BioCyc" id="BSUB:BSU32810-MONOMER"/>
<dbReference type="PRO" id="PR:O32175"/>
<dbReference type="Proteomes" id="UP000001570">
    <property type="component" value="Chromosome"/>
</dbReference>
<dbReference type="GO" id="GO:0016491">
    <property type="term" value="F:oxidoreductase activity"/>
    <property type="evidence" value="ECO:0007669"/>
    <property type="project" value="UniProtKB-KW"/>
</dbReference>
<dbReference type="CDD" id="cd03036">
    <property type="entry name" value="ArsC_like"/>
    <property type="match status" value="1"/>
</dbReference>
<dbReference type="Gene3D" id="3.40.30.10">
    <property type="entry name" value="Glutaredoxin"/>
    <property type="match status" value="1"/>
</dbReference>
<dbReference type="InterPro" id="IPR006660">
    <property type="entry name" value="Arsenate_reductase-like"/>
</dbReference>
<dbReference type="InterPro" id="IPR036249">
    <property type="entry name" value="Thioredoxin-like_sf"/>
</dbReference>
<dbReference type="InterPro" id="IPR006504">
    <property type="entry name" value="Tscrpt_reg_Spx/MgsR"/>
</dbReference>
<dbReference type="NCBIfam" id="TIGR01617">
    <property type="entry name" value="arsC_related"/>
    <property type="match status" value="1"/>
</dbReference>
<dbReference type="PANTHER" id="PTHR30041">
    <property type="entry name" value="ARSENATE REDUCTASE"/>
    <property type="match status" value="1"/>
</dbReference>
<dbReference type="PANTHER" id="PTHR30041:SF8">
    <property type="entry name" value="PROTEIN YFFB"/>
    <property type="match status" value="1"/>
</dbReference>
<dbReference type="Pfam" id="PF03960">
    <property type="entry name" value="ArsC"/>
    <property type="match status" value="1"/>
</dbReference>
<dbReference type="SUPFAM" id="SSF52833">
    <property type="entry name" value="Thioredoxin-like"/>
    <property type="match status" value="1"/>
</dbReference>
<dbReference type="PROSITE" id="PS51353">
    <property type="entry name" value="ARSC"/>
    <property type="match status" value="1"/>
</dbReference>